<protein>
    <recommendedName>
        <fullName evidence="1">Shikimate dehydrogenase (NADP(+))</fullName>
        <shortName evidence="1">SDH</shortName>
        <ecNumber evidence="1">1.1.1.25</ecNumber>
    </recommendedName>
</protein>
<evidence type="ECO:0000255" key="1">
    <source>
        <dbReference type="HAMAP-Rule" id="MF_00222"/>
    </source>
</evidence>
<gene>
    <name evidence="1" type="primary">aroE</name>
    <name type="ordered locus">XC_4041</name>
</gene>
<comment type="function">
    <text evidence="1">Involved in the biosynthesis of the chorismate, which leads to the biosynthesis of aromatic amino acids. Catalyzes the reversible NADPH linked reduction of 3-dehydroshikimate (DHSA) to yield shikimate (SA).</text>
</comment>
<comment type="catalytic activity">
    <reaction evidence="1">
        <text>shikimate + NADP(+) = 3-dehydroshikimate + NADPH + H(+)</text>
        <dbReference type="Rhea" id="RHEA:17737"/>
        <dbReference type="ChEBI" id="CHEBI:15378"/>
        <dbReference type="ChEBI" id="CHEBI:16630"/>
        <dbReference type="ChEBI" id="CHEBI:36208"/>
        <dbReference type="ChEBI" id="CHEBI:57783"/>
        <dbReference type="ChEBI" id="CHEBI:58349"/>
        <dbReference type="EC" id="1.1.1.25"/>
    </reaction>
</comment>
<comment type="pathway">
    <text evidence="1">Metabolic intermediate biosynthesis; chorismate biosynthesis; chorismate from D-erythrose 4-phosphate and phosphoenolpyruvate: step 4/7.</text>
</comment>
<comment type="subunit">
    <text evidence="1">Homodimer.</text>
</comment>
<comment type="similarity">
    <text evidence="1">Belongs to the shikimate dehydrogenase family.</text>
</comment>
<accession>Q4UPE3</accession>
<proteinExistence type="inferred from homology"/>
<reference key="1">
    <citation type="journal article" date="2005" name="Genome Res.">
        <title>Comparative and functional genomic analyses of the pathogenicity of phytopathogen Xanthomonas campestris pv. campestris.</title>
        <authorList>
            <person name="Qian W."/>
            <person name="Jia Y."/>
            <person name="Ren S.-X."/>
            <person name="He Y.-Q."/>
            <person name="Feng J.-X."/>
            <person name="Lu L.-F."/>
            <person name="Sun Q."/>
            <person name="Ying G."/>
            <person name="Tang D.-J."/>
            <person name="Tang H."/>
            <person name="Wu W."/>
            <person name="Hao P."/>
            <person name="Wang L."/>
            <person name="Jiang B.-L."/>
            <person name="Zeng S."/>
            <person name="Gu W.-Y."/>
            <person name="Lu G."/>
            <person name="Rong L."/>
            <person name="Tian Y."/>
            <person name="Yao Z."/>
            <person name="Fu G."/>
            <person name="Chen B."/>
            <person name="Fang R."/>
            <person name="Qiang B."/>
            <person name="Chen Z."/>
            <person name="Zhao G.-P."/>
            <person name="Tang J.-L."/>
            <person name="He C."/>
        </authorList>
    </citation>
    <scope>NUCLEOTIDE SEQUENCE [LARGE SCALE GENOMIC DNA]</scope>
    <source>
        <strain>8004</strain>
    </source>
</reference>
<organism>
    <name type="scientific">Xanthomonas campestris pv. campestris (strain 8004)</name>
    <dbReference type="NCBI Taxonomy" id="314565"/>
    <lineage>
        <taxon>Bacteria</taxon>
        <taxon>Pseudomonadati</taxon>
        <taxon>Pseudomonadota</taxon>
        <taxon>Gammaproteobacteria</taxon>
        <taxon>Lysobacterales</taxon>
        <taxon>Lysobacteraceae</taxon>
        <taxon>Xanthomonas</taxon>
    </lineage>
</organism>
<feature type="chain" id="PRO_1000021362" description="Shikimate dehydrogenase (NADP(+))">
    <location>
        <begin position="1"/>
        <end position="283"/>
    </location>
</feature>
<feature type="active site" description="Proton acceptor" evidence="1">
    <location>
        <position position="67"/>
    </location>
</feature>
<feature type="binding site" evidence="1">
    <location>
        <begin position="16"/>
        <end position="18"/>
    </location>
    <ligand>
        <name>shikimate</name>
        <dbReference type="ChEBI" id="CHEBI:36208"/>
    </ligand>
</feature>
<feature type="binding site" evidence="1">
    <location>
        <position position="63"/>
    </location>
    <ligand>
        <name>shikimate</name>
        <dbReference type="ChEBI" id="CHEBI:36208"/>
    </ligand>
</feature>
<feature type="binding site" evidence="1">
    <location>
        <position position="79"/>
    </location>
    <ligand>
        <name>NADP(+)</name>
        <dbReference type="ChEBI" id="CHEBI:58349"/>
    </ligand>
</feature>
<feature type="binding site" evidence="1">
    <location>
        <position position="88"/>
    </location>
    <ligand>
        <name>shikimate</name>
        <dbReference type="ChEBI" id="CHEBI:36208"/>
    </ligand>
</feature>
<feature type="binding site" evidence="1">
    <location>
        <position position="103"/>
    </location>
    <ligand>
        <name>shikimate</name>
        <dbReference type="ChEBI" id="CHEBI:36208"/>
    </ligand>
</feature>
<feature type="binding site" evidence="1">
    <location>
        <begin position="128"/>
        <end position="132"/>
    </location>
    <ligand>
        <name>NADP(+)</name>
        <dbReference type="ChEBI" id="CHEBI:58349"/>
    </ligand>
</feature>
<feature type="binding site" evidence="1">
    <location>
        <position position="223"/>
    </location>
    <ligand>
        <name>NADP(+)</name>
        <dbReference type="ChEBI" id="CHEBI:58349"/>
    </ligand>
</feature>
<feature type="binding site" evidence="1">
    <location>
        <position position="243"/>
    </location>
    <ligand>
        <name>NADP(+)</name>
        <dbReference type="ChEBI" id="CHEBI:58349"/>
    </ligand>
</feature>
<keyword id="KW-0028">Amino-acid biosynthesis</keyword>
<keyword id="KW-0057">Aromatic amino acid biosynthesis</keyword>
<keyword id="KW-0521">NADP</keyword>
<keyword id="KW-0560">Oxidoreductase</keyword>
<name>AROE_XANC8</name>
<dbReference type="EC" id="1.1.1.25" evidence="1"/>
<dbReference type="EMBL" id="CP000050">
    <property type="protein sequence ID" value="AAY51080.1"/>
    <property type="molecule type" value="Genomic_DNA"/>
</dbReference>
<dbReference type="RefSeq" id="WP_011039025.1">
    <property type="nucleotide sequence ID" value="NZ_CP155948.1"/>
</dbReference>
<dbReference type="SMR" id="Q4UPE3"/>
<dbReference type="KEGG" id="xcb:XC_4041"/>
<dbReference type="HOGENOM" id="CLU_044063_2_1_6"/>
<dbReference type="UniPathway" id="UPA00053">
    <property type="reaction ID" value="UER00087"/>
</dbReference>
<dbReference type="Proteomes" id="UP000000420">
    <property type="component" value="Chromosome"/>
</dbReference>
<dbReference type="GO" id="GO:0005829">
    <property type="term" value="C:cytosol"/>
    <property type="evidence" value="ECO:0007669"/>
    <property type="project" value="TreeGrafter"/>
</dbReference>
<dbReference type="GO" id="GO:0050661">
    <property type="term" value="F:NADP binding"/>
    <property type="evidence" value="ECO:0007669"/>
    <property type="project" value="InterPro"/>
</dbReference>
<dbReference type="GO" id="GO:0004764">
    <property type="term" value="F:shikimate 3-dehydrogenase (NADP+) activity"/>
    <property type="evidence" value="ECO:0007669"/>
    <property type="project" value="UniProtKB-UniRule"/>
</dbReference>
<dbReference type="GO" id="GO:0008652">
    <property type="term" value="P:amino acid biosynthetic process"/>
    <property type="evidence" value="ECO:0007669"/>
    <property type="project" value="UniProtKB-KW"/>
</dbReference>
<dbReference type="GO" id="GO:0009073">
    <property type="term" value="P:aromatic amino acid family biosynthetic process"/>
    <property type="evidence" value="ECO:0007669"/>
    <property type="project" value="UniProtKB-KW"/>
</dbReference>
<dbReference type="GO" id="GO:0009423">
    <property type="term" value="P:chorismate biosynthetic process"/>
    <property type="evidence" value="ECO:0007669"/>
    <property type="project" value="UniProtKB-UniRule"/>
</dbReference>
<dbReference type="GO" id="GO:0019632">
    <property type="term" value="P:shikimate metabolic process"/>
    <property type="evidence" value="ECO:0007669"/>
    <property type="project" value="InterPro"/>
</dbReference>
<dbReference type="CDD" id="cd01065">
    <property type="entry name" value="NAD_bind_Shikimate_DH"/>
    <property type="match status" value="1"/>
</dbReference>
<dbReference type="FunFam" id="3.40.50.10860:FF:000006">
    <property type="entry name" value="Shikimate dehydrogenase (NADP(+))"/>
    <property type="match status" value="1"/>
</dbReference>
<dbReference type="Gene3D" id="3.40.50.10860">
    <property type="entry name" value="Leucine Dehydrogenase, chain A, domain 1"/>
    <property type="match status" value="1"/>
</dbReference>
<dbReference type="Gene3D" id="3.40.50.720">
    <property type="entry name" value="NAD(P)-binding Rossmann-like Domain"/>
    <property type="match status" value="1"/>
</dbReference>
<dbReference type="HAMAP" id="MF_00222">
    <property type="entry name" value="Shikimate_DH_AroE"/>
    <property type="match status" value="1"/>
</dbReference>
<dbReference type="InterPro" id="IPR046346">
    <property type="entry name" value="Aminoacid_DH-like_N_sf"/>
</dbReference>
<dbReference type="InterPro" id="IPR036291">
    <property type="entry name" value="NAD(P)-bd_dom_sf"/>
</dbReference>
<dbReference type="InterPro" id="IPR041121">
    <property type="entry name" value="SDH_C"/>
</dbReference>
<dbReference type="InterPro" id="IPR011342">
    <property type="entry name" value="Shikimate_DH"/>
</dbReference>
<dbReference type="InterPro" id="IPR013708">
    <property type="entry name" value="Shikimate_DH-bd_N"/>
</dbReference>
<dbReference type="InterPro" id="IPR022893">
    <property type="entry name" value="Shikimate_DH_fam"/>
</dbReference>
<dbReference type="InterPro" id="IPR006151">
    <property type="entry name" value="Shikm_DH/Glu-tRNA_Rdtase"/>
</dbReference>
<dbReference type="NCBIfam" id="TIGR00507">
    <property type="entry name" value="aroE"/>
    <property type="match status" value="1"/>
</dbReference>
<dbReference type="NCBIfam" id="NF001310">
    <property type="entry name" value="PRK00258.1-2"/>
    <property type="match status" value="1"/>
</dbReference>
<dbReference type="PANTHER" id="PTHR21089:SF1">
    <property type="entry name" value="BIFUNCTIONAL 3-DEHYDROQUINATE DEHYDRATASE_SHIKIMATE DEHYDROGENASE, CHLOROPLASTIC"/>
    <property type="match status" value="1"/>
</dbReference>
<dbReference type="PANTHER" id="PTHR21089">
    <property type="entry name" value="SHIKIMATE DEHYDROGENASE"/>
    <property type="match status" value="1"/>
</dbReference>
<dbReference type="Pfam" id="PF18317">
    <property type="entry name" value="SDH_C"/>
    <property type="match status" value="1"/>
</dbReference>
<dbReference type="Pfam" id="PF01488">
    <property type="entry name" value="Shikimate_DH"/>
    <property type="match status" value="1"/>
</dbReference>
<dbReference type="Pfam" id="PF08501">
    <property type="entry name" value="Shikimate_dh_N"/>
    <property type="match status" value="1"/>
</dbReference>
<dbReference type="SUPFAM" id="SSF53223">
    <property type="entry name" value="Aminoacid dehydrogenase-like, N-terminal domain"/>
    <property type="match status" value="1"/>
</dbReference>
<dbReference type="SUPFAM" id="SSF51735">
    <property type="entry name" value="NAD(P)-binding Rossmann-fold domains"/>
    <property type="match status" value="1"/>
</dbReference>
<sequence length="283" mass="29703">MPVSRYAVFGHPVAHSLSPAIHADFGKQTGIALDYTAIDAAPEEFTAALERFAADGGKGANVTLPLKEAAFALSASLSDRARVAGAVNTLVRNDGQWQGDNTDGAGLVRDLTERHGLDLRGRRVLLLGAGGAARGVAPALLEAGITEMVVVNRSPERADALCDALGEPGRVVSRYLEDLRELGDFELIVNATAAGRDRDAGAFALPLGLVNSLTAAVDLNYGATAIAFLAWARSAQCRYAIDGLGMLVEQAAESFALWHGVRPQTDPVYDALRARDAVLVSAD</sequence>